<comment type="function">
    <text evidence="1">Nucleotide-binding protein.</text>
</comment>
<comment type="similarity">
    <text evidence="1">Belongs to the YajQ family.</text>
</comment>
<proteinExistence type="inferred from homology"/>
<sequence length="161" mass="18246">MPSFDVVSEVNKHELTNAVDQANRELDTRFDFKGVQAKFELEDGKVINQSAPSDFQVKQMTDILRARLLARGIDVRCLEFGDMETNLAGARQKVTVKQGIEQKQAKQLVAKLKEAKLKVEAQINGDKLRITGKKRDDLQDAIALLKKADFELPLQFDNFRD</sequence>
<name>Y647_XANOM</name>
<feature type="chain" id="PRO_0000261991" description="Nucleotide-binding protein XOO0647">
    <location>
        <begin position="1"/>
        <end position="161"/>
    </location>
</feature>
<dbReference type="EMBL" id="AP008229">
    <property type="protein sequence ID" value="BAE67402.1"/>
    <property type="molecule type" value="Genomic_DNA"/>
</dbReference>
<dbReference type="RefSeq" id="WP_011257604.1">
    <property type="nucleotide sequence ID" value="NC_007705.1"/>
</dbReference>
<dbReference type="SMR" id="Q2P7S5"/>
<dbReference type="KEGG" id="xom:XOO0647"/>
<dbReference type="HOGENOM" id="CLU_099839_1_0_6"/>
<dbReference type="GO" id="GO:0005829">
    <property type="term" value="C:cytosol"/>
    <property type="evidence" value="ECO:0007669"/>
    <property type="project" value="TreeGrafter"/>
</dbReference>
<dbReference type="GO" id="GO:0000166">
    <property type="term" value="F:nucleotide binding"/>
    <property type="evidence" value="ECO:0007669"/>
    <property type="project" value="TreeGrafter"/>
</dbReference>
<dbReference type="CDD" id="cd11740">
    <property type="entry name" value="YajQ_like"/>
    <property type="match status" value="1"/>
</dbReference>
<dbReference type="FunFam" id="3.30.70.990:FF:000001">
    <property type="entry name" value="UPF0234 protein YajQ"/>
    <property type="match status" value="1"/>
</dbReference>
<dbReference type="Gene3D" id="3.30.70.860">
    <property type="match status" value="1"/>
</dbReference>
<dbReference type="Gene3D" id="3.30.70.990">
    <property type="entry name" value="YajQ-like, domain 2"/>
    <property type="match status" value="1"/>
</dbReference>
<dbReference type="HAMAP" id="MF_00632">
    <property type="entry name" value="YajQ"/>
    <property type="match status" value="1"/>
</dbReference>
<dbReference type="InterPro" id="IPR007551">
    <property type="entry name" value="DUF520"/>
</dbReference>
<dbReference type="InterPro" id="IPR035571">
    <property type="entry name" value="UPF0234-like_C"/>
</dbReference>
<dbReference type="InterPro" id="IPR035570">
    <property type="entry name" value="UPF0234_N"/>
</dbReference>
<dbReference type="InterPro" id="IPR036183">
    <property type="entry name" value="YajQ-like_sf"/>
</dbReference>
<dbReference type="NCBIfam" id="NF003819">
    <property type="entry name" value="PRK05412.1"/>
    <property type="match status" value="1"/>
</dbReference>
<dbReference type="PANTHER" id="PTHR30476">
    <property type="entry name" value="UPF0234 PROTEIN YAJQ"/>
    <property type="match status" value="1"/>
</dbReference>
<dbReference type="PANTHER" id="PTHR30476:SF0">
    <property type="entry name" value="UPF0234 PROTEIN YAJQ"/>
    <property type="match status" value="1"/>
</dbReference>
<dbReference type="Pfam" id="PF04461">
    <property type="entry name" value="DUF520"/>
    <property type="match status" value="1"/>
</dbReference>
<dbReference type="SUPFAM" id="SSF89963">
    <property type="entry name" value="YajQ-like"/>
    <property type="match status" value="2"/>
</dbReference>
<gene>
    <name type="ordered locus">XOO0647</name>
</gene>
<evidence type="ECO:0000255" key="1">
    <source>
        <dbReference type="HAMAP-Rule" id="MF_00632"/>
    </source>
</evidence>
<keyword id="KW-0547">Nucleotide-binding</keyword>
<protein>
    <recommendedName>
        <fullName evidence="1">Nucleotide-binding protein XOO0647</fullName>
    </recommendedName>
</protein>
<organism>
    <name type="scientific">Xanthomonas oryzae pv. oryzae (strain MAFF 311018)</name>
    <dbReference type="NCBI Taxonomy" id="342109"/>
    <lineage>
        <taxon>Bacteria</taxon>
        <taxon>Pseudomonadati</taxon>
        <taxon>Pseudomonadota</taxon>
        <taxon>Gammaproteobacteria</taxon>
        <taxon>Lysobacterales</taxon>
        <taxon>Lysobacteraceae</taxon>
        <taxon>Xanthomonas</taxon>
    </lineage>
</organism>
<reference key="1">
    <citation type="journal article" date="2005" name="Jpn. Agric. Res. Q.">
        <title>Genome sequence of Xanthomonas oryzae pv. oryzae suggests contribution of large numbers of effector genes and insertion sequences to its race diversity.</title>
        <authorList>
            <person name="Ochiai H."/>
            <person name="Inoue Y."/>
            <person name="Takeya M."/>
            <person name="Sasaki A."/>
            <person name="Kaku H."/>
        </authorList>
    </citation>
    <scope>NUCLEOTIDE SEQUENCE [LARGE SCALE GENOMIC DNA]</scope>
    <source>
        <strain>MAFF 311018</strain>
    </source>
</reference>
<accession>Q2P7S5</accession>